<protein>
    <recommendedName>
        <fullName>Centriolar satellite-associated tubulin polyglutamylase complex regulator 1</fullName>
    </recommendedName>
</protein>
<sequence length="331" mass="37451">MLSPERLALPDYEYLAQRHVLTYMEDAVCQLLENREDISQYGIARFFTEYFNSVCQGTHILFREFSFVQATPHNRVSFLRAFWRCFRTVGKNGDLLTMKEYHCLLQLLCPDFPLELTQKAARIVLMDDAMDCLMSFSDFLFAFQIQFYYSEFLDSVAAIYEDLLSGKNPNTVIVPTSSSGQHRQRPALGEAGMLEGVEASLFYQCLENLCDRHKYSCPPPALVKEALSNVQRLTFYGFLMALSKHHGINQALGALPDKGDLMHDPAMDEELERLLAQVPGLVNSITASPEASCLPSRTPPRVGSPWRPLHHSRKVDGESDGSTEETDESET</sequence>
<comment type="function">
    <text evidence="2">Regulator of the tubulin polyglutamylase complex (TPGC) that controls cytoskeletal organization, nuclear shape, and cilium disassembly by balancing microtubule and actin assembly. Regulates the assembly and stability of the TPGC and thereby modulates polyglutamylation of the microtubule, which antagonizes MAP4 binding.</text>
</comment>
<comment type="subunit">
    <text evidence="2">Interacts with PCM1. Interacts with TTLL1, TPGS1, TPGS2 and LRRC49; the interactions link CSTPP1 to the complex TPGC. Binds to alpha-tubulin.</text>
</comment>
<comment type="subcellular location">
    <subcellularLocation>
        <location evidence="2">Cytoplasm</location>
        <location evidence="2">Cytoskeleton</location>
        <location evidence="2">Microtubule organizing center</location>
        <location evidence="2">Centrosome</location>
        <location evidence="2">Centriolar satellite</location>
    </subcellularLocation>
    <subcellularLocation>
        <location evidence="2">Cytoplasm</location>
        <location evidence="2">Cytoskeleton</location>
    </subcellularLocation>
    <text evidence="2">Associated with microtubules.</text>
</comment>
<comment type="similarity">
    <text evidence="4">Belongs to the CSTPP1 family.</text>
</comment>
<feature type="chain" id="PRO_0000281426" description="Centriolar satellite-associated tubulin polyglutamylase complex regulator 1">
    <location>
        <begin position="1"/>
        <end position="331"/>
    </location>
</feature>
<feature type="region of interest" description="Required for interaction with TPGS1, LRRC49, and TTLL1" evidence="2">
    <location>
        <begin position="1"/>
        <end position="225"/>
    </location>
</feature>
<feature type="region of interest" description="Required for interaction with PCM1" evidence="2">
    <location>
        <begin position="1"/>
        <end position="111"/>
    </location>
</feature>
<feature type="region of interest" description="Required for interaction with TPGS2" evidence="2">
    <location>
        <begin position="112"/>
        <end position="331"/>
    </location>
</feature>
<feature type="region of interest" description="Disordered" evidence="3">
    <location>
        <begin position="289"/>
        <end position="331"/>
    </location>
</feature>
<feature type="compositionally biased region" description="Acidic residues" evidence="3">
    <location>
        <begin position="318"/>
        <end position="331"/>
    </location>
</feature>
<feature type="modified residue" description="Phosphoserine" evidence="1">
    <location>
        <position position="319"/>
    </location>
</feature>
<name>CSTP1_MACFA</name>
<reference key="1">
    <citation type="submission" date="2005-06" db="EMBL/GenBank/DDBJ databases">
        <title>DNA sequences of macaque genes expressed in brain or testis and its evolutionary implications.</title>
        <authorList>
            <consortium name="International consortium for macaque cDNA sequencing and analysis"/>
        </authorList>
    </citation>
    <scope>NUCLEOTIDE SEQUENCE [LARGE SCALE MRNA]</scope>
    <source>
        <tissue>Brain cortex</tissue>
    </source>
</reference>
<keyword id="KW-0963">Cytoplasm</keyword>
<keyword id="KW-0206">Cytoskeleton</keyword>
<keyword id="KW-0493">Microtubule</keyword>
<keyword id="KW-0597">Phosphoprotein</keyword>
<keyword id="KW-1185">Reference proteome</keyword>
<dbReference type="EMBL" id="AB169640">
    <property type="protein sequence ID" value="BAE01721.1"/>
    <property type="molecule type" value="mRNA"/>
</dbReference>
<dbReference type="RefSeq" id="NP_001271722.1">
    <property type="nucleotide sequence ID" value="NM_001284793.1"/>
</dbReference>
<dbReference type="RefSeq" id="XP_045227706.1">
    <property type="nucleotide sequence ID" value="XM_045371771.2"/>
</dbReference>
<dbReference type="STRING" id="9541.ENSMFAP00000038136"/>
<dbReference type="GeneID" id="101865906"/>
<dbReference type="eggNOG" id="ENOG502QRVN">
    <property type="taxonomic scope" value="Eukaryota"/>
</dbReference>
<dbReference type="Proteomes" id="UP000233100">
    <property type="component" value="Unplaced"/>
</dbReference>
<dbReference type="GO" id="GO:0034451">
    <property type="term" value="C:centriolar satellite"/>
    <property type="evidence" value="ECO:0007669"/>
    <property type="project" value="UniProtKB-SubCell"/>
</dbReference>
<dbReference type="GO" id="GO:0005737">
    <property type="term" value="C:cytoplasm"/>
    <property type="evidence" value="ECO:0007669"/>
    <property type="project" value="UniProtKB-KW"/>
</dbReference>
<dbReference type="GO" id="GO:0005874">
    <property type="term" value="C:microtubule"/>
    <property type="evidence" value="ECO:0007669"/>
    <property type="project" value="UniProtKB-KW"/>
</dbReference>
<dbReference type="CDD" id="cd22959">
    <property type="entry name" value="DD_C11orf49"/>
    <property type="match status" value="1"/>
</dbReference>
<dbReference type="InterPro" id="IPR038968">
    <property type="entry name" value="CSTPP1"/>
</dbReference>
<dbReference type="PANTHER" id="PTHR34252:SF1">
    <property type="entry name" value="CENTRIOLAR SATELLITE-ASSOCIATED TUBULIN POLYGLUTAMYLASE COMPLEX REGULATOR 1"/>
    <property type="match status" value="1"/>
</dbReference>
<dbReference type="PANTHER" id="PTHR34252">
    <property type="entry name" value="UPF0705 PROTEIN C11ORF49"/>
    <property type="match status" value="1"/>
</dbReference>
<accession>Q4R5A4</accession>
<evidence type="ECO:0000250" key="1">
    <source>
        <dbReference type="UniProtKB" id="Q8BHR8"/>
    </source>
</evidence>
<evidence type="ECO:0000250" key="2">
    <source>
        <dbReference type="UniProtKB" id="Q9H6J7"/>
    </source>
</evidence>
<evidence type="ECO:0000256" key="3">
    <source>
        <dbReference type="SAM" id="MobiDB-lite"/>
    </source>
</evidence>
<evidence type="ECO:0000305" key="4"/>
<gene>
    <name type="primary">CSTPP1</name>
    <name type="ORF">QccE-10352</name>
</gene>
<organism>
    <name type="scientific">Macaca fascicularis</name>
    <name type="common">Crab-eating macaque</name>
    <name type="synonym">Cynomolgus monkey</name>
    <dbReference type="NCBI Taxonomy" id="9541"/>
    <lineage>
        <taxon>Eukaryota</taxon>
        <taxon>Metazoa</taxon>
        <taxon>Chordata</taxon>
        <taxon>Craniata</taxon>
        <taxon>Vertebrata</taxon>
        <taxon>Euteleostomi</taxon>
        <taxon>Mammalia</taxon>
        <taxon>Eutheria</taxon>
        <taxon>Euarchontoglires</taxon>
        <taxon>Primates</taxon>
        <taxon>Haplorrhini</taxon>
        <taxon>Catarrhini</taxon>
        <taxon>Cercopithecidae</taxon>
        <taxon>Cercopithecinae</taxon>
        <taxon>Macaca</taxon>
    </lineage>
</organism>
<proteinExistence type="evidence at transcript level"/>